<name>H2B_ASTRU</name>
<sequence>MPPKPSGKGQKKAGKAKGAPRTDKKRRRKRKESYGIYIYKVMKQVHPDTGISSRAMSIMNSFVNDIFERIAAEASRLAHYNKKSTITSREVQTAVRLLLPGELAKHAVSEGTKAVTKYTTSK</sequence>
<evidence type="ECO:0000250" key="1"/>
<evidence type="ECO:0000256" key="2">
    <source>
        <dbReference type="SAM" id="MobiDB-lite"/>
    </source>
</evidence>
<evidence type="ECO:0000269" key="3">
    <source>
    </source>
</evidence>
<evidence type="ECO:0000305" key="4"/>
<organism>
    <name type="scientific">Asterias rubens</name>
    <name type="common">Common European starfish</name>
    <name type="synonym">Asterias vulgaris</name>
    <dbReference type="NCBI Taxonomy" id="7604"/>
    <lineage>
        <taxon>Eukaryota</taxon>
        <taxon>Metazoa</taxon>
        <taxon>Echinodermata</taxon>
        <taxon>Eleutherozoa</taxon>
        <taxon>Asterozoa</taxon>
        <taxon>Asteroidea</taxon>
        <taxon>Forcipulatacea</taxon>
        <taxon>Forcipulatida</taxon>
        <taxon>Asteriidae</taxon>
        <taxon>Asterias</taxon>
    </lineage>
</organism>
<dbReference type="PIR" id="A02613">
    <property type="entry name" value="HSSF22"/>
</dbReference>
<dbReference type="SMR" id="P02286"/>
<dbReference type="iPTMnet" id="P02286"/>
<dbReference type="EnsemblMetazoa" id="ENSASRT00000015391">
    <property type="protein sequence ID" value="ENSASRP00000014519"/>
    <property type="gene ID" value="ENSASRG00000009922"/>
</dbReference>
<dbReference type="OMA" id="ELAKHAX"/>
<dbReference type="OrthoDB" id="1733721at2759"/>
<dbReference type="GO" id="GO:0000786">
    <property type="term" value="C:nucleosome"/>
    <property type="evidence" value="ECO:0007669"/>
    <property type="project" value="UniProtKB-KW"/>
</dbReference>
<dbReference type="GO" id="GO:0005634">
    <property type="term" value="C:nucleus"/>
    <property type="evidence" value="ECO:0007669"/>
    <property type="project" value="UniProtKB-SubCell"/>
</dbReference>
<dbReference type="GO" id="GO:0003677">
    <property type="term" value="F:DNA binding"/>
    <property type="evidence" value="ECO:0007669"/>
    <property type="project" value="UniProtKB-KW"/>
</dbReference>
<dbReference type="GO" id="GO:0046982">
    <property type="term" value="F:protein heterodimerization activity"/>
    <property type="evidence" value="ECO:0007669"/>
    <property type="project" value="InterPro"/>
</dbReference>
<dbReference type="GO" id="GO:0044877">
    <property type="term" value="F:protein-containing complex binding"/>
    <property type="evidence" value="ECO:0000250"/>
    <property type="project" value="UniProtKB"/>
</dbReference>
<dbReference type="GO" id="GO:0030527">
    <property type="term" value="F:structural constituent of chromatin"/>
    <property type="evidence" value="ECO:0007669"/>
    <property type="project" value="InterPro"/>
</dbReference>
<dbReference type="CDD" id="cd22910">
    <property type="entry name" value="HFD_H2B"/>
    <property type="match status" value="1"/>
</dbReference>
<dbReference type="FunFam" id="1.10.20.10:FF:000016">
    <property type="entry name" value="Histone H2B"/>
    <property type="match status" value="1"/>
</dbReference>
<dbReference type="Gene3D" id="1.10.20.10">
    <property type="entry name" value="Histone, subunit A"/>
    <property type="match status" value="1"/>
</dbReference>
<dbReference type="InterPro" id="IPR009072">
    <property type="entry name" value="Histone-fold"/>
</dbReference>
<dbReference type="InterPro" id="IPR007125">
    <property type="entry name" value="Histone_H2A/H2B/H3"/>
</dbReference>
<dbReference type="InterPro" id="IPR000558">
    <property type="entry name" value="Histone_H2B"/>
</dbReference>
<dbReference type="InterPro" id="IPR055333">
    <property type="entry name" value="HISTONE_H2B_site"/>
</dbReference>
<dbReference type="PANTHER" id="PTHR23428">
    <property type="entry name" value="HISTONE H2B"/>
    <property type="match status" value="1"/>
</dbReference>
<dbReference type="Pfam" id="PF00125">
    <property type="entry name" value="Histone"/>
    <property type="match status" value="1"/>
</dbReference>
<dbReference type="PRINTS" id="PR00621">
    <property type="entry name" value="HISTONEH2B"/>
</dbReference>
<dbReference type="SMART" id="SM00427">
    <property type="entry name" value="H2B"/>
    <property type="match status" value="1"/>
</dbReference>
<dbReference type="SUPFAM" id="SSF47113">
    <property type="entry name" value="Histone-fold"/>
    <property type="match status" value="1"/>
</dbReference>
<dbReference type="PROSITE" id="PS00357">
    <property type="entry name" value="HISTONE_H2B"/>
    <property type="match status" value="1"/>
</dbReference>
<feature type="initiator methionine" description="Removed" evidence="3">
    <location>
        <position position="1"/>
    </location>
</feature>
<feature type="chain" id="PRO_0000071882" description="Histone H2B, gonadal">
    <location>
        <begin position="2"/>
        <end position="122"/>
    </location>
</feature>
<feature type="region of interest" description="Disordered" evidence="2">
    <location>
        <begin position="1"/>
        <end position="31"/>
    </location>
</feature>
<feature type="modified residue" description="N,N-dimethylproline" evidence="3">
    <location>
        <position position="2"/>
    </location>
</feature>
<feature type="glycosylation site" description="O-linked (GlcNAc) serine" evidence="1">
    <location>
        <position position="109"/>
    </location>
</feature>
<feature type="cross-link" description="Glycyl lysine isopeptide (Lys-Gly) (interchain with G-Cter in ubiquitin)" evidence="1">
    <location>
        <position position="117"/>
    </location>
</feature>
<comment type="function">
    <text>Core component of nucleosome. Nucleosomes wrap and compact DNA into chromatin, limiting DNA accessibility to the cellular machineries which require DNA as a template. Histones thereby play a central role in transcription regulation, DNA repair, DNA replication and chromosomal stability. DNA accessibility is regulated via a complex set of post-translational modifications of histones, also called histone code, and nucleosome remodeling.</text>
</comment>
<comment type="subunit">
    <text>The nucleosome is a histone octamer containing two molecules each of H2A, H2B, H3 and H4 assembled in one H3-H4 heterotetramer and two H2A-H2B heterodimers. The octamer wraps approximately 147 bp of DNA.</text>
</comment>
<comment type="subcellular location">
    <subcellularLocation>
        <location>Nucleus</location>
    </subcellularLocation>
    <subcellularLocation>
        <location>Chromosome</location>
    </subcellularLocation>
</comment>
<comment type="PTM">
    <text evidence="1">Monoubiquitination of Lys-117 gives a specific tag for epigenetic transcriptional activation and is also prerequisite for histone H3 'Lys-4' and 'Lys-79' methylation.</text>
</comment>
<comment type="PTM">
    <text evidence="1">GlcNAcylation at Ser-109 promotes monoubiquitination of Lys-117. It fluctuates in response to extracellular glucose, and associates with transcribed genes (By similarity).</text>
</comment>
<comment type="similarity">
    <text evidence="4">Belongs to the histone H2B family.</text>
</comment>
<protein>
    <recommendedName>
        <fullName>Histone H2B, gonadal</fullName>
    </recommendedName>
</protein>
<reference key="1">
    <citation type="journal article" date="1985" name="Eur. J. Biochem.">
        <title>Primary structure of histone H2B from gonads of the starfish Asterias rubens. Identification of an N-dimethylproline residue at the amino-terminal.</title>
        <authorList>
            <person name="Martinage A."/>
            <person name="Briand G."/>
            <person name="van Dorsselaer A."/>
            <person name="Turner C.H."/>
            <person name="Sautiere P."/>
        </authorList>
    </citation>
    <scope>PROTEIN SEQUENCE OF 2-122</scope>
    <scope>METHYLATION AT PRO-2</scope>
</reference>
<keyword id="KW-0158">Chromosome</keyword>
<keyword id="KW-0903">Direct protein sequencing</keyword>
<keyword id="KW-0238">DNA-binding</keyword>
<keyword id="KW-0325">Glycoprotein</keyword>
<keyword id="KW-1017">Isopeptide bond</keyword>
<keyword id="KW-0488">Methylation</keyword>
<keyword id="KW-0544">Nucleosome core</keyword>
<keyword id="KW-0539">Nucleus</keyword>
<keyword id="KW-0832">Ubl conjugation</keyword>
<proteinExistence type="evidence at protein level"/>
<accession>P02286</accession>